<dbReference type="EMBL" id="CM001233">
    <property type="protein sequence ID" value="EHA52057.1"/>
    <property type="molecule type" value="Genomic_DNA"/>
</dbReference>
<dbReference type="RefSeq" id="XP_003711864.1">
    <property type="nucleotide sequence ID" value="XM_003711816.1"/>
</dbReference>
<dbReference type="STRING" id="242507.P0C148"/>
<dbReference type="EnsemblFungi" id="MGG_06017T0">
    <property type="protein sequence ID" value="MGG_06017T0"/>
    <property type="gene ID" value="MGG_06017"/>
</dbReference>
<dbReference type="GeneID" id="2683958"/>
<dbReference type="KEGG" id="mgr:MGG_06017"/>
<dbReference type="VEuPathDB" id="FungiDB:MGG_06017"/>
<dbReference type="eggNOG" id="KOG3144">
    <property type="taxonomic scope" value="Eukaryota"/>
</dbReference>
<dbReference type="HOGENOM" id="CLU_069429_0_0_1"/>
<dbReference type="InParanoid" id="P0C148"/>
<dbReference type="OMA" id="WQRWPVT"/>
<dbReference type="OrthoDB" id="17366at2759"/>
<dbReference type="UniPathway" id="UPA00196"/>
<dbReference type="Proteomes" id="UP000009058">
    <property type="component" value="Chromosome 3"/>
</dbReference>
<dbReference type="GO" id="GO:0005789">
    <property type="term" value="C:endoplasmic reticulum membrane"/>
    <property type="evidence" value="ECO:0007669"/>
    <property type="project" value="UniProtKB-SubCell"/>
</dbReference>
<dbReference type="GO" id="GO:0006506">
    <property type="term" value="P:GPI anchor biosynthetic process"/>
    <property type="evidence" value="ECO:0007669"/>
    <property type="project" value="UniProtKB-UniPathway"/>
</dbReference>
<dbReference type="InterPro" id="IPR009580">
    <property type="entry name" value="GPI_biosynthesis_protein_Pig-F"/>
</dbReference>
<dbReference type="Pfam" id="PF06699">
    <property type="entry name" value="PIG-F"/>
    <property type="match status" value="1"/>
</dbReference>
<feature type="chain" id="PRO_0000191768" description="Glycosylphosphatidylinositol anchor biosynthesis protein 11">
    <location>
        <begin position="1"/>
        <end position="264"/>
    </location>
</feature>
<feature type="transmembrane region" description="Helical" evidence="2">
    <location>
        <begin position="49"/>
        <end position="69"/>
    </location>
</feature>
<feature type="transmembrane region" description="Helical" evidence="2">
    <location>
        <begin position="83"/>
        <end position="103"/>
    </location>
</feature>
<feature type="transmembrane region" description="Helical" evidence="2">
    <location>
        <begin position="132"/>
        <end position="152"/>
    </location>
</feature>
<feature type="transmembrane region" description="Helical" evidence="2">
    <location>
        <begin position="160"/>
        <end position="180"/>
    </location>
</feature>
<feature type="transmembrane region" description="Helical" evidence="2">
    <location>
        <begin position="202"/>
        <end position="222"/>
    </location>
</feature>
<feature type="transmembrane region" description="Helical" evidence="2">
    <location>
        <begin position="233"/>
        <end position="253"/>
    </location>
</feature>
<feature type="region of interest" description="Disordered" evidence="3">
    <location>
        <begin position="1"/>
        <end position="45"/>
    </location>
</feature>
<gene>
    <name type="primary">GPI11</name>
    <name type="ORF">MGG_06017</name>
</gene>
<keyword id="KW-0256">Endoplasmic reticulum</keyword>
<keyword id="KW-0337">GPI-anchor biosynthesis</keyword>
<keyword id="KW-0472">Membrane</keyword>
<keyword id="KW-1185">Reference proteome</keyword>
<keyword id="KW-0812">Transmembrane</keyword>
<keyword id="KW-1133">Transmembrane helix</keyword>
<organism>
    <name type="scientific">Pyricularia oryzae (strain 70-15 / ATCC MYA-4617 / FGSC 8958)</name>
    <name type="common">Rice blast fungus</name>
    <name type="synonym">Magnaporthe oryzae</name>
    <dbReference type="NCBI Taxonomy" id="242507"/>
    <lineage>
        <taxon>Eukaryota</taxon>
        <taxon>Fungi</taxon>
        <taxon>Dikarya</taxon>
        <taxon>Ascomycota</taxon>
        <taxon>Pezizomycotina</taxon>
        <taxon>Sordariomycetes</taxon>
        <taxon>Sordariomycetidae</taxon>
        <taxon>Magnaporthales</taxon>
        <taxon>Pyriculariaceae</taxon>
        <taxon>Pyricularia</taxon>
    </lineage>
</organism>
<sequence length="264" mass="28408">MPLVDPVTMSTPSTPAKAMGKSLPNTVKDPSPPPKAGSHTRSPVESPSNSYYIAASIPALQLQIFVLLWKRLVDDPVATMSRLILPVMALIQVFYAVVLLPVAGSGKQWRKPRPGEKKKAQGGEPNIALATLLSLLLTLIATPPIHALMVLFGAPFLTHAPHTFLCALNLSLLTLFPLFYTRGAEASAWRALAGFTAPIDESVGGLVGACFGAWLGAVPIPLDWDRDWQRWPVTVLTGIYVGYAIGSYGGRTLLRIRGYSAKRS</sequence>
<evidence type="ECO:0000250" key="1"/>
<evidence type="ECO:0000255" key="2"/>
<evidence type="ECO:0000256" key="3">
    <source>
        <dbReference type="SAM" id="MobiDB-lite"/>
    </source>
</evidence>
<evidence type="ECO:0000305" key="4"/>
<comment type="function">
    <text evidence="1">Acts in the GPI biosynthetic pathway between GlcNAc-PI synthesis and GPI transfer to protein.</text>
</comment>
<comment type="pathway">
    <text>Glycolipid biosynthesis; glycosylphosphatidylinositol-anchor biosynthesis.</text>
</comment>
<comment type="subcellular location">
    <subcellularLocation>
        <location evidence="1">Endoplasmic reticulum membrane</location>
        <topology evidence="1">Multi-pass membrane protein</topology>
    </subcellularLocation>
</comment>
<comment type="similarity">
    <text evidence="4">Belongs to the PIGF family.</text>
</comment>
<accession>P0C148</accession>
<accession>A4QWF2</accession>
<accession>G4N4U5</accession>
<protein>
    <recommendedName>
        <fullName>Glycosylphosphatidylinositol anchor biosynthesis protein 11</fullName>
    </recommendedName>
</protein>
<reference key="1">
    <citation type="journal article" date="2005" name="Nature">
        <title>The genome sequence of the rice blast fungus Magnaporthe grisea.</title>
        <authorList>
            <person name="Dean R.A."/>
            <person name="Talbot N.J."/>
            <person name="Ebbole D.J."/>
            <person name="Farman M.L."/>
            <person name="Mitchell T.K."/>
            <person name="Orbach M.J."/>
            <person name="Thon M.R."/>
            <person name="Kulkarni R."/>
            <person name="Xu J.-R."/>
            <person name="Pan H."/>
            <person name="Read N.D."/>
            <person name="Lee Y.-H."/>
            <person name="Carbone I."/>
            <person name="Brown D."/>
            <person name="Oh Y.Y."/>
            <person name="Donofrio N."/>
            <person name="Jeong J.S."/>
            <person name="Soanes D.M."/>
            <person name="Djonovic S."/>
            <person name="Kolomiets E."/>
            <person name="Rehmeyer C."/>
            <person name="Li W."/>
            <person name="Harding M."/>
            <person name="Kim S."/>
            <person name="Lebrun M.-H."/>
            <person name="Bohnert H."/>
            <person name="Coughlan S."/>
            <person name="Butler J."/>
            <person name="Calvo S.E."/>
            <person name="Ma L.-J."/>
            <person name="Nicol R."/>
            <person name="Purcell S."/>
            <person name="Nusbaum C."/>
            <person name="Galagan J.E."/>
            <person name="Birren B.W."/>
        </authorList>
    </citation>
    <scope>NUCLEOTIDE SEQUENCE [LARGE SCALE GENOMIC DNA]</scope>
    <source>
        <strain>70-15 / ATCC MYA-4617 / FGSC 8958</strain>
    </source>
</reference>
<name>GPI11_PYRO7</name>
<proteinExistence type="inferred from homology"/>